<keyword id="KW-1185">Reference proteome</keyword>
<protein>
    <recommendedName>
        <fullName>Putative glucosamine-6-phosphate deaminase-like protein BT_0258</fullName>
    </recommendedName>
</protein>
<reference key="1">
    <citation type="journal article" date="2003" name="Science">
        <title>A genomic view of the human-Bacteroides thetaiotaomicron symbiosis.</title>
        <authorList>
            <person name="Xu J."/>
            <person name="Bjursell M.K."/>
            <person name="Himrod J."/>
            <person name="Deng S."/>
            <person name="Carmichael L.K."/>
            <person name="Chiang H.C."/>
            <person name="Hooper L.V."/>
            <person name="Gordon J.I."/>
        </authorList>
    </citation>
    <scope>NUCLEOTIDE SEQUENCE [LARGE SCALE GENOMIC DNA]</scope>
    <source>
        <strain>ATCC 29148 / DSM 2079 / JCM 5827 / CCUG 10774 / NCTC 10582 / VPI-5482 / E50</strain>
    </source>
</reference>
<evidence type="ECO:0000250" key="1"/>
<evidence type="ECO:0000305" key="2"/>
<sequence length="663" mass="75266">MKTNLSSQITLHRVSPRYYRPENAFEKSVLTRLEKIPTDIYESVEEGANYIACEIAQTIREKQKAGRFCVLALPGGNSPSHVYSELIRMHKEEGLSFRNVIVFNMYEYYPLTADAINSNFNALKEMLLDHVDIDKQNIFTPDGTIAKDTIFEYCRLYEQRIESFGGIDIALLGIGRVGNIAFNEPGSRLNSTTRLILLDNASRNEASKIFGTIENTPISSITMGVSTILGAKKVYLLAWGENKAAMIKECVEGPISDTIPASYLQTHNNAHVAIDLSASMNLTRIQRPWLVTSCEWNDKLIRSAIVWLCQLTGKPILKLTNKDYNENGLSELLALFGSAYNVNIKIFNDLQHTITGWPGGKPNADDTYRPERAKPYPKRVVIFSPHPDDDVISMGGTLRRLVEQKHEVHVAYETSGNIAVGDEEVVRFMHFINGFNQIFNNSEDLVISEKYAEIRKFLKEKKDGDMDSRDILTIKGLIRRGEARTASSYNNIPLDRVHFLDLPFYETGKIQKNPISEADVEIVRNLLREIKPHQIFVAGDLADPHGTHRVCTDAVFAAVDLEKEEGAKWLKDCRIWMYRGAWAEWEIENIEMAVPISPEELRAKRNSILKHQSQMESAPFLGNDERLFWQRSEDRNRGTATLYDQLGLASYEAMEAFVEYIPL</sequence>
<organism>
    <name type="scientific">Bacteroides thetaiotaomicron (strain ATCC 29148 / DSM 2079 / JCM 5827 / CCUG 10774 / NCTC 10582 / VPI-5482 / E50)</name>
    <dbReference type="NCBI Taxonomy" id="226186"/>
    <lineage>
        <taxon>Bacteria</taxon>
        <taxon>Pseudomonadati</taxon>
        <taxon>Bacteroidota</taxon>
        <taxon>Bacteroidia</taxon>
        <taxon>Bacteroidales</taxon>
        <taxon>Bacteroidaceae</taxon>
        <taxon>Bacteroides</taxon>
    </lineage>
</organism>
<name>Y258_BACTN</name>
<comment type="similarity">
    <text evidence="2">In the N-terminal section; belongs to the glucosamine/galactosamine-6-phosphate isomerase family. NagB subfamily.</text>
</comment>
<comment type="caution">
    <text evidence="2">Lacks the two conserved aspartate and the histidine residues in position 106, 177 and 179 respectively, that are involved in the active site of the protein in orthologs; they are replaced by a tyrosine, a valine and an asparagine residue respectively.</text>
</comment>
<dbReference type="EMBL" id="AE015928">
    <property type="protein sequence ID" value="AAO75365.1"/>
    <property type="molecule type" value="Genomic_DNA"/>
</dbReference>
<dbReference type="RefSeq" id="NP_809171.1">
    <property type="nucleotide sequence ID" value="NC_004663.1"/>
</dbReference>
<dbReference type="RefSeq" id="WP_008766195.1">
    <property type="nucleotide sequence ID" value="NZ_UYXG01000025.1"/>
</dbReference>
<dbReference type="SMR" id="Q8AB53"/>
<dbReference type="STRING" id="226186.BT_0258"/>
<dbReference type="PaxDb" id="226186-BT_0258"/>
<dbReference type="EnsemblBacteria" id="AAO75365">
    <property type="protein sequence ID" value="AAO75365"/>
    <property type="gene ID" value="BT_0258"/>
</dbReference>
<dbReference type="KEGG" id="bth:BT_0258"/>
<dbReference type="PATRIC" id="fig|226186.12.peg.259"/>
<dbReference type="eggNOG" id="COG0363">
    <property type="taxonomic scope" value="Bacteria"/>
</dbReference>
<dbReference type="HOGENOM" id="CLU_425041_0_0_10"/>
<dbReference type="InParanoid" id="Q8AB53"/>
<dbReference type="OrthoDB" id="9791139at2"/>
<dbReference type="Proteomes" id="UP000001414">
    <property type="component" value="Chromosome"/>
</dbReference>
<dbReference type="GO" id="GO:0004342">
    <property type="term" value="F:glucosamine-6-phosphate deaminase activity"/>
    <property type="evidence" value="ECO:0007669"/>
    <property type="project" value="InterPro"/>
</dbReference>
<dbReference type="GO" id="GO:0005975">
    <property type="term" value="P:carbohydrate metabolic process"/>
    <property type="evidence" value="ECO:0007669"/>
    <property type="project" value="InterPro"/>
</dbReference>
<dbReference type="GO" id="GO:0006044">
    <property type="term" value="P:N-acetylglucosamine metabolic process"/>
    <property type="evidence" value="ECO:0007669"/>
    <property type="project" value="InterPro"/>
</dbReference>
<dbReference type="CDD" id="cd01399">
    <property type="entry name" value="GlcN6P_deaminase"/>
    <property type="match status" value="1"/>
</dbReference>
<dbReference type="Gene3D" id="3.40.50.1360">
    <property type="match status" value="1"/>
</dbReference>
<dbReference type="Gene3D" id="3.40.50.10320">
    <property type="entry name" value="LmbE-like"/>
    <property type="match status" value="1"/>
</dbReference>
<dbReference type="InterPro" id="IPR006148">
    <property type="entry name" value="Glc/Gal-6P_isomerase"/>
</dbReference>
<dbReference type="InterPro" id="IPR052960">
    <property type="entry name" value="GlcN6P_deaminase-like"/>
</dbReference>
<dbReference type="InterPro" id="IPR003737">
    <property type="entry name" value="GlcNAc_PI_deacetylase-related"/>
</dbReference>
<dbReference type="InterPro" id="IPR004547">
    <property type="entry name" value="Glucosamine6P_isomerase"/>
</dbReference>
<dbReference type="InterPro" id="IPR018321">
    <property type="entry name" value="Glucosamine6P_isomerase_CS"/>
</dbReference>
<dbReference type="InterPro" id="IPR024078">
    <property type="entry name" value="LmbE-like_dom_sf"/>
</dbReference>
<dbReference type="InterPro" id="IPR037171">
    <property type="entry name" value="NagB/RpiA_transferase-like"/>
</dbReference>
<dbReference type="NCBIfam" id="NF002557">
    <property type="entry name" value="PRK02122.1"/>
    <property type="match status" value="1"/>
</dbReference>
<dbReference type="PANTHER" id="PTHR42892">
    <property type="entry name" value="GLUCOSAMINE-6-PHOSPHATE DEAMINASE-LIKE PROTEIN BT_0258-RELATED"/>
    <property type="match status" value="1"/>
</dbReference>
<dbReference type="PANTHER" id="PTHR42892:SF1">
    <property type="entry name" value="GLUCOSAMINE-6-PHOSPHATE ISOMERASE"/>
    <property type="match status" value="1"/>
</dbReference>
<dbReference type="Pfam" id="PF01182">
    <property type="entry name" value="Glucosamine_iso"/>
    <property type="match status" value="1"/>
</dbReference>
<dbReference type="Pfam" id="PF02585">
    <property type="entry name" value="PIG-L"/>
    <property type="match status" value="1"/>
</dbReference>
<dbReference type="SUPFAM" id="SSF102588">
    <property type="entry name" value="LmbE-like"/>
    <property type="match status" value="1"/>
</dbReference>
<dbReference type="SUPFAM" id="SSF100950">
    <property type="entry name" value="NagB/RpiA/CoA transferase-like"/>
    <property type="match status" value="1"/>
</dbReference>
<dbReference type="PROSITE" id="PS01161">
    <property type="entry name" value="GLC_GALNAC_ISOMERASE"/>
    <property type="match status" value="1"/>
</dbReference>
<accession>Q8AB53</accession>
<feature type="chain" id="PRO_0000160190" description="Putative glucosamine-6-phosphate deaminase-like protein BT_0258">
    <location>
        <begin position="1"/>
        <end position="663"/>
    </location>
</feature>
<feature type="region of interest" description="Glucosamine-6-phosphate deaminase-like">
    <location>
        <begin position="1"/>
        <end position="290"/>
    </location>
</feature>
<feature type="active site" evidence="1">
    <location>
        <position position="184"/>
    </location>
</feature>
<proteinExistence type="inferred from homology"/>
<gene>
    <name type="ordered locus">BT_0258</name>
</gene>